<name>PLSY_NEIM0</name>
<accession>A9LYY1</accession>
<protein>
    <recommendedName>
        <fullName evidence="1">Glycerol-3-phosphate acyltransferase</fullName>
    </recommendedName>
    <alternativeName>
        <fullName evidence="1">Acyl-PO4 G3P acyltransferase</fullName>
    </alternativeName>
    <alternativeName>
        <fullName evidence="1">Acyl-phosphate--glycerol-3-phosphate acyltransferase</fullName>
    </alternativeName>
    <alternativeName>
        <fullName evidence="1">G3P acyltransferase</fullName>
        <shortName evidence="1">GPAT</shortName>
        <ecNumber evidence="1">2.3.1.275</ecNumber>
    </alternativeName>
    <alternativeName>
        <fullName evidence="1">Lysophosphatidic acid synthase</fullName>
        <shortName evidence="1">LPA synthase</shortName>
    </alternativeName>
</protein>
<feature type="chain" id="PRO_1000084388" description="Glycerol-3-phosphate acyltransferase">
    <location>
        <begin position="1"/>
        <end position="200"/>
    </location>
</feature>
<feature type="transmembrane region" description="Helical" evidence="1">
    <location>
        <begin position="2"/>
        <end position="22"/>
    </location>
</feature>
<feature type="transmembrane region" description="Helical" evidence="1">
    <location>
        <begin position="51"/>
        <end position="71"/>
    </location>
</feature>
<feature type="transmembrane region" description="Helical" evidence="1">
    <location>
        <begin position="84"/>
        <end position="104"/>
    </location>
</feature>
<feature type="transmembrane region" description="Helical" evidence="1">
    <location>
        <begin position="114"/>
        <end position="134"/>
    </location>
</feature>
<feature type="transmembrane region" description="Helical" evidence="1">
    <location>
        <begin position="159"/>
        <end position="179"/>
    </location>
</feature>
<organism>
    <name type="scientific">Neisseria meningitidis serogroup C (strain 053442)</name>
    <dbReference type="NCBI Taxonomy" id="374833"/>
    <lineage>
        <taxon>Bacteria</taxon>
        <taxon>Pseudomonadati</taxon>
        <taxon>Pseudomonadota</taxon>
        <taxon>Betaproteobacteria</taxon>
        <taxon>Neisseriales</taxon>
        <taxon>Neisseriaceae</taxon>
        <taxon>Neisseria</taxon>
    </lineage>
</organism>
<dbReference type="EC" id="2.3.1.275" evidence="1"/>
<dbReference type="EMBL" id="CP000381">
    <property type="protein sequence ID" value="ABX73158.1"/>
    <property type="molecule type" value="Genomic_DNA"/>
</dbReference>
<dbReference type="RefSeq" id="WP_002258192.1">
    <property type="nucleotide sequence ID" value="NC_010120.1"/>
</dbReference>
<dbReference type="SMR" id="A9LYY1"/>
<dbReference type="KEGG" id="nmn:NMCC_0978"/>
<dbReference type="HOGENOM" id="CLU_081254_0_0_4"/>
<dbReference type="UniPathway" id="UPA00085"/>
<dbReference type="Proteomes" id="UP000001177">
    <property type="component" value="Chromosome"/>
</dbReference>
<dbReference type="GO" id="GO:0005886">
    <property type="term" value="C:plasma membrane"/>
    <property type="evidence" value="ECO:0007669"/>
    <property type="project" value="UniProtKB-SubCell"/>
</dbReference>
<dbReference type="GO" id="GO:0043772">
    <property type="term" value="F:acyl-phosphate glycerol-3-phosphate acyltransferase activity"/>
    <property type="evidence" value="ECO:0007669"/>
    <property type="project" value="UniProtKB-UniRule"/>
</dbReference>
<dbReference type="GO" id="GO:0008654">
    <property type="term" value="P:phospholipid biosynthetic process"/>
    <property type="evidence" value="ECO:0007669"/>
    <property type="project" value="UniProtKB-UniRule"/>
</dbReference>
<dbReference type="HAMAP" id="MF_01043">
    <property type="entry name" value="PlsY"/>
    <property type="match status" value="1"/>
</dbReference>
<dbReference type="InterPro" id="IPR003811">
    <property type="entry name" value="G3P_acylTferase_PlsY"/>
</dbReference>
<dbReference type="NCBIfam" id="TIGR00023">
    <property type="entry name" value="glycerol-3-phosphate 1-O-acyltransferase PlsY"/>
    <property type="match status" value="1"/>
</dbReference>
<dbReference type="PANTHER" id="PTHR30309:SF0">
    <property type="entry name" value="GLYCEROL-3-PHOSPHATE ACYLTRANSFERASE-RELATED"/>
    <property type="match status" value="1"/>
</dbReference>
<dbReference type="PANTHER" id="PTHR30309">
    <property type="entry name" value="INNER MEMBRANE PROTEIN YGIH"/>
    <property type="match status" value="1"/>
</dbReference>
<dbReference type="Pfam" id="PF02660">
    <property type="entry name" value="G3P_acyltransf"/>
    <property type="match status" value="1"/>
</dbReference>
<dbReference type="SMART" id="SM01207">
    <property type="entry name" value="G3P_acyltransf"/>
    <property type="match status" value="1"/>
</dbReference>
<proteinExistence type="inferred from homology"/>
<keyword id="KW-0997">Cell inner membrane</keyword>
<keyword id="KW-1003">Cell membrane</keyword>
<keyword id="KW-0444">Lipid biosynthesis</keyword>
<keyword id="KW-0443">Lipid metabolism</keyword>
<keyword id="KW-0472">Membrane</keyword>
<keyword id="KW-0594">Phospholipid biosynthesis</keyword>
<keyword id="KW-1208">Phospholipid metabolism</keyword>
<keyword id="KW-0808">Transferase</keyword>
<keyword id="KW-0812">Transmembrane</keyword>
<keyword id="KW-1133">Transmembrane helix</keyword>
<sequence length="200" mass="20787">MFNISAVAVSYLIGSLSFAVIVSKYYGMDDPRTYGSGNPGATNVLRSGKKKAAALTLLGDAAKGLVAVLLARVLQEPLGLSDSAIAAVALAALVGHMWPVFFGFKGGKGVATALGVLLALSPATALVCALIWLVMAFGFKVSSLAALTATIAAPLAALFFMPHTSWIWATLLIALLVLFRHKSNIVKLLEGRESKIGGSR</sequence>
<reference key="1">
    <citation type="journal article" date="2008" name="Genomics">
        <title>Characterization of ST-4821 complex, a unique Neisseria meningitidis clone.</title>
        <authorList>
            <person name="Peng J."/>
            <person name="Yang L."/>
            <person name="Yang F."/>
            <person name="Yang J."/>
            <person name="Yan Y."/>
            <person name="Nie H."/>
            <person name="Zhang X."/>
            <person name="Xiong Z."/>
            <person name="Jiang Y."/>
            <person name="Cheng F."/>
            <person name="Xu X."/>
            <person name="Chen S."/>
            <person name="Sun L."/>
            <person name="Li W."/>
            <person name="Shen Y."/>
            <person name="Shao Z."/>
            <person name="Liang X."/>
            <person name="Xu J."/>
            <person name="Jin Q."/>
        </authorList>
    </citation>
    <scope>NUCLEOTIDE SEQUENCE [LARGE SCALE GENOMIC DNA]</scope>
    <source>
        <strain>053442</strain>
    </source>
</reference>
<comment type="function">
    <text evidence="1">Catalyzes the transfer of an acyl group from acyl-phosphate (acyl-PO(4)) to glycerol-3-phosphate (G3P) to form lysophosphatidic acid (LPA). This enzyme utilizes acyl-phosphate as fatty acyl donor, but not acyl-CoA or acyl-ACP.</text>
</comment>
<comment type="catalytic activity">
    <reaction evidence="1">
        <text>an acyl phosphate + sn-glycerol 3-phosphate = a 1-acyl-sn-glycero-3-phosphate + phosphate</text>
        <dbReference type="Rhea" id="RHEA:34075"/>
        <dbReference type="ChEBI" id="CHEBI:43474"/>
        <dbReference type="ChEBI" id="CHEBI:57597"/>
        <dbReference type="ChEBI" id="CHEBI:57970"/>
        <dbReference type="ChEBI" id="CHEBI:59918"/>
        <dbReference type="EC" id="2.3.1.275"/>
    </reaction>
</comment>
<comment type="pathway">
    <text evidence="1">Lipid metabolism; phospholipid metabolism.</text>
</comment>
<comment type="subunit">
    <text evidence="1">Probably interacts with PlsX.</text>
</comment>
<comment type="subcellular location">
    <subcellularLocation>
        <location evidence="1">Cell inner membrane</location>
        <topology evidence="1">Multi-pass membrane protein</topology>
    </subcellularLocation>
</comment>
<comment type="similarity">
    <text evidence="1">Belongs to the PlsY family.</text>
</comment>
<gene>
    <name evidence="1" type="primary">plsY</name>
    <name type="ordered locus">NMCC_0978</name>
</gene>
<evidence type="ECO:0000255" key="1">
    <source>
        <dbReference type="HAMAP-Rule" id="MF_01043"/>
    </source>
</evidence>